<comment type="function">
    <text evidence="2 3">Core component of multiple cullin-5-RING E3 ubiquitin-protein ligase complexes (ECS complexes, also named CRL5 complexes), which mediate the ubiquitination and subsequent proteasomal degradation of target proteins. Acts a scaffold protein that contributes to catalysis through positioning of the substrate and the ubiquitin-conjugating enzyme. The functional specificity of the E3 ubiquitin-protein ligase complex depends on the variable SOCS box-containing substrate recognition component (By similarity). Acts as a key regulator of neuron positioning during cortex development: component of various SOCS-containing ECS complexes, such as the ECS(SOCS7) complex, that regulate reelin signaling by mediating ubiquitination and degradation of DAB1 (By similarity). ECS(SOCS1) seems to direct ubiquitination of JAK2. The ECS(SOCS2) complex mediates the ubiquitination and subsequent proteasomal degradation of phosphorylated EPOR and GHR. The ECS(SPSB3) complex catalyzes ubiquitination of nuclear CGAS. ECS(KLHDC1) complex is part of the DesCEND (destruction via C-end degrons) pathway and mediates ubiquitination and degradation of truncated SELENOS selenoprotein produced by failed UGA/Sec decoding, which ends with a glycine. The ECS(ASB9) complex mediates ubiquitination and degradation of CKB. As part of some ECS complex, promotes 'Lys-11'-linked ubiquitination and degradation of BTRC. As part of a multisubunit ECS complex, polyubiquitinates monoubiquitinated POLR2A. As part of the ECS(RAB40C) complex, mediates ANKRD28 ubiquitination and degradation, thereby regulating protein phosphatase 6 (PP6) complex activity and focal adhesion assembly during cell migration (By similarity). As part of the ECS(RAB40A) complex, mediates RHOU 'Lys-48'-linked ubiquitination and degradation, thus inhibiting focal adhesion disassembly during cell migration (By similarity). As part of the ECS(RAB40B) complex, mediates LIMA1/EPLIN and RAP2 ubiquitination, thereby regulating actin cytoskeleton dynamics and stress fiber formation during cell migration (By similarity). May form a cell surface vasopressin receptor (By similarity).</text>
</comment>
<comment type="pathway">
    <text evidence="2">Protein modification; protein ubiquitination.</text>
</comment>
<comment type="subunit">
    <text evidence="2 3">Component of multiple cullin-5-RING E3 ubiquitin-protein ligase complexes (ECS complexes, also named CRL5 complexes) formed of CUL5, Elongin BC (ELOB and ELOC), RNF7/RBX2 and a variable SOCS box domain-containing protein as substrate-specific recognition component. CUL5-containing ECS complexes specifically contain RNF7/RBX2, and not RBX1, as catalytic subunit. Component of the ECS(ASB2) complex with the substrate recognition component ASB2. Component of the ECS(ASB6) complex with the substrate recognition component ASB6. Component of the ECS(ASB7) complex with the substrate recognition component ASB7. Component of the ECS(ASB9) complex with the substrate recognition component ASB9. Component of the ECS(ASB11) complex with the substrate recognition component ASB11. Component of the ECS(ASB12) complex with the substrate recognition component ASB12. Component of the ECS(LRRC41) complex with the substrate recognition component LRRC41. Component of the ECS(SOCS1) complex with the substrate recognition component SOCS1. Component of the ECS(SOCS2) complex with the substrate recognition component SOCS2. Component of the ECS(WSB1) complex with the substrate recognition subunit WSB1. Component of the ECS(SOCS3) complex with the substrate recognition component SOCS3 (By similarity). Component of the ECS(SOCS7) complex with the substrate recognition component SOCS7 (By similarity). Component of the ECS(SPSB1) complex with the substrate recognition component SPSB1. Component of the ECS(SPSB3) complex with the substrate recognition component SPSB3. Component of the ECS(SPSB2) complex with the substrate recognition component SPSB2. Component of the ECS(SPSB4) complex with the substrate recognition component SPSB4. Component of the ECS(RAB40) complex with the substrate recognition subunit RAB40A, RAB40B or RAB40C. Component of the ECS(KLHDC1) complex with the substrate recognition component KLHDC1. Component of the ECS(PCMTD1) complex with the substrate recognition subunit PCMTD1. May also form complexes containing RBX1 and ELOA or VHL; additional evidence is however required to confirm this result in vivo. Interacts (when neddylated) with ARIH2; leading to activate the E3 ligase activity of ARIH2. Interacts with ERCC6; the interaction is induced by DNA damaging agents or inhibitors of RNA polymerase II elongation. Interacts with ELOA (via the BC-box). Interacts (unneddylated form) with DCUN1D1, DCUN1D2, DCUN1D3, DCUN1D4 and DCUN1D5; these interactions promote the cullin neddylation (By similarity).</text>
</comment>
<comment type="subcellular location">
    <subcellularLocation>
        <location evidence="2">Nucleus</location>
    </subcellularLocation>
    <text evidence="2">Localizes to sites of DNA damage in a UBAP2 and UBAP2L-dependent manner.</text>
</comment>
<comment type="tissue specificity">
    <text evidence="6">Kidney collecting tubules.</text>
</comment>
<comment type="PTM">
    <text evidence="2">Neddylated; which enhances the ubiquitination activity of ECS complexes and prevents binding of the inhibitor CAND1. Deneddylated via its interaction with the COP9 signalosome (CSN).</text>
</comment>
<comment type="similarity">
    <text evidence="5">Belongs to the cullin family.</text>
</comment>
<keyword id="KW-1017">Isopeptide bond</keyword>
<keyword id="KW-0539">Nucleus</keyword>
<keyword id="KW-0597">Phosphoprotein</keyword>
<keyword id="KW-0675">Receptor</keyword>
<keyword id="KW-1185">Reference proteome</keyword>
<keyword id="KW-0832">Ubl conjugation</keyword>
<keyword id="KW-0833">Ubl conjugation pathway</keyword>
<name>CUL5_RABIT</name>
<feature type="chain" id="PRO_0000119800" description="Cullin-5">
    <location>
        <begin position="1"/>
        <end position="780"/>
    </location>
</feature>
<feature type="domain" description="Cullin neddylation" evidence="4">
    <location>
        <begin position="713"/>
        <end position="772"/>
    </location>
</feature>
<feature type="modified residue" description="Phosphoserine" evidence="2">
    <location>
        <position position="34"/>
    </location>
</feature>
<feature type="modified residue" description="Phosphothreonine" evidence="2">
    <location>
        <position position="210"/>
    </location>
</feature>
<feature type="cross-link" description="Glycyl lysine isopeptide (Lys-Gly) (interchain with G-Cter in NEDD8)" evidence="1">
    <location>
        <position position="724"/>
    </location>
</feature>
<gene>
    <name type="primary">CUL5</name>
    <name evidence="7" type="synonym">VACM1</name>
</gene>
<evidence type="ECO:0000250" key="1">
    <source>
        <dbReference type="UniProtKB" id="Q13616"/>
    </source>
</evidence>
<evidence type="ECO:0000250" key="2">
    <source>
        <dbReference type="UniProtKB" id="Q93034"/>
    </source>
</evidence>
<evidence type="ECO:0000250" key="3">
    <source>
        <dbReference type="UniProtKB" id="Q9D5V5"/>
    </source>
</evidence>
<evidence type="ECO:0000255" key="4"/>
<evidence type="ECO:0000255" key="5">
    <source>
        <dbReference type="PROSITE-ProRule" id="PRU00330"/>
    </source>
</evidence>
<evidence type="ECO:0000269" key="6">
    <source>
    </source>
</evidence>
<evidence type="ECO:0000303" key="7">
    <source>
    </source>
</evidence>
<evidence type="ECO:0000305" key="8"/>
<dbReference type="EMBL" id="U30380">
    <property type="protein sequence ID" value="AAB63562.1"/>
    <property type="molecule type" value="mRNA"/>
</dbReference>
<dbReference type="PIR" id="I47038">
    <property type="entry name" value="I47038"/>
</dbReference>
<dbReference type="RefSeq" id="NP_001075824.1">
    <property type="nucleotide sequence ID" value="NM_001082355.1"/>
</dbReference>
<dbReference type="SMR" id="Q29425"/>
<dbReference type="FunCoup" id="Q29425">
    <property type="interactions" value="1830"/>
</dbReference>
<dbReference type="STRING" id="9986.ENSOCUP00000009389"/>
<dbReference type="PaxDb" id="9986-ENSOCUP00000009389"/>
<dbReference type="GeneID" id="100009207"/>
<dbReference type="KEGG" id="ocu:100009207"/>
<dbReference type="CTD" id="8065"/>
<dbReference type="eggNOG" id="KOG2285">
    <property type="taxonomic scope" value="Eukaryota"/>
</dbReference>
<dbReference type="InParanoid" id="Q29425"/>
<dbReference type="OrthoDB" id="27073at2759"/>
<dbReference type="UniPathway" id="UPA00143"/>
<dbReference type="Proteomes" id="UP000001811">
    <property type="component" value="Unplaced"/>
</dbReference>
<dbReference type="GO" id="GO:0031466">
    <property type="term" value="C:Cul5-RING ubiquitin ligase complex"/>
    <property type="evidence" value="ECO:0000250"/>
    <property type="project" value="UniProtKB"/>
</dbReference>
<dbReference type="GO" id="GO:0005634">
    <property type="term" value="C:nucleus"/>
    <property type="evidence" value="ECO:0007669"/>
    <property type="project" value="UniProtKB-SubCell"/>
</dbReference>
<dbReference type="GO" id="GO:0090734">
    <property type="term" value="C:site of DNA damage"/>
    <property type="evidence" value="ECO:0000250"/>
    <property type="project" value="UniProtKB"/>
</dbReference>
<dbReference type="GO" id="GO:0160072">
    <property type="term" value="F:ubiquitin ligase complex scaffold activity"/>
    <property type="evidence" value="ECO:0000250"/>
    <property type="project" value="UniProtKB"/>
</dbReference>
<dbReference type="GO" id="GO:0031625">
    <property type="term" value="F:ubiquitin protein ligase binding"/>
    <property type="evidence" value="ECO:0007669"/>
    <property type="project" value="InterPro"/>
</dbReference>
<dbReference type="GO" id="GO:0016567">
    <property type="term" value="P:protein ubiquitination"/>
    <property type="evidence" value="ECO:0007669"/>
    <property type="project" value="UniProtKB-UniPathway"/>
</dbReference>
<dbReference type="GO" id="GO:0038026">
    <property type="term" value="P:reelin-mediated signaling pathway"/>
    <property type="evidence" value="ECO:0000250"/>
    <property type="project" value="UniProtKB"/>
</dbReference>
<dbReference type="GO" id="GO:2001222">
    <property type="term" value="P:regulation of neuron migration"/>
    <property type="evidence" value="ECO:0000250"/>
    <property type="project" value="UniProtKB"/>
</dbReference>
<dbReference type="GO" id="GO:0006511">
    <property type="term" value="P:ubiquitin-dependent protein catabolic process"/>
    <property type="evidence" value="ECO:0007669"/>
    <property type="project" value="InterPro"/>
</dbReference>
<dbReference type="FunFam" id="1.10.10.10:FF:000142">
    <property type="entry name" value="Cullin 5"/>
    <property type="match status" value="1"/>
</dbReference>
<dbReference type="FunFam" id="1.20.1310.10:FF:000009">
    <property type="entry name" value="Cullin 5"/>
    <property type="match status" value="1"/>
</dbReference>
<dbReference type="FunFam" id="1.20.1310.10:FF:000014">
    <property type="entry name" value="Cullin 5"/>
    <property type="match status" value="1"/>
</dbReference>
<dbReference type="FunFam" id="1.20.1310.10:FF:000017">
    <property type="entry name" value="Cullin 5"/>
    <property type="match status" value="1"/>
</dbReference>
<dbReference type="FunFam" id="3.30.230.130:FF:000004">
    <property type="entry name" value="Cullin 5"/>
    <property type="match status" value="1"/>
</dbReference>
<dbReference type="Gene3D" id="1.20.1310.10">
    <property type="entry name" value="Cullin Repeats"/>
    <property type="match status" value="4"/>
</dbReference>
<dbReference type="Gene3D" id="3.30.230.130">
    <property type="entry name" value="Cullin, Chain C, Domain 2"/>
    <property type="match status" value="1"/>
</dbReference>
<dbReference type="Gene3D" id="1.10.10.10">
    <property type="entry name" value="Winged helix-like DNA-binding domain superfamily/Winged helix DNA-binding domain"/>
    <property type="match status" value="1"/>
</dbReference>
<dbReference type="InterPro" id="IPR045093">
    <property type="entry name" value="Cullin"/>
</dbReference>
<dbReference type="InterPro" id="IPR016157">
    <property type="entry name" value="Cullin_CS"/>
</dbReference>
<dbReference type="InterPro" id="IPR016158">
    <property type="entry name" value="Cullin_homology"/>
</dbReference>
<dbReference type="InterPro" id="IPR036317">
    <property type="entry name" value="Cullin_homology_sf"/>
</dbReference>
<dbReference type="InterPro" id="IPR001373">
    <property type="entry name" value="Cullin_N"/>
</dbReference>
<dbReference type="InterPro" id="IPR019559">
    <property type="entry name" value="Cullin_neddylation_domain"/>
</dbReference>
<dbReference type="InterPro" id="IPR016159">
    <property type="entry name" value="Cullin_repeat-like_dom_sf"/>
</dbReference>
<dbReference type="InterPro" id="IPR036388">
    <property type="entry name" value="WH-like_DNA-bd_sf"/>
</dbReference>
<dbReference type="InterPro" id="IPR036390">
    <property type="entry name" value="WH_DNA-bd_sf"/>
</dbReference>
<dbReference type="PANTHER" id="PTHR11932">
    <property type="entry name" value="CULLIN"/>
    <property type="match status" value="1"/>
</dbReference>
<dbReference type="Pfam" id="PF00888">
    <property type="entry name" value="Cullin"/>
    <property type="match status" value="1"/>
</dbReference>
<dbReference type="Pfam" id="PF10557">
    <property type="entry name" value="Cullin_Nedd8"/>
    <property type="match status" value="1"/>
</dbReference>
<dbReference type="SMART" id="SM00182">
    <property type="entry name" value="CULLIN"/>
    <property type="match status" value="1"/>
</dbReference>
<dbReference type="SMART" id="SM00884">
    <property type="entry name" value="Cullin_Nedd8"/>
    <property type="match status" value="1"/>
</dbReference>
<dbReference type="SUPFAM" id="SSF75632">
    <property type="entry name" value="Cullin homology domain"/>
    <property type="match status" value="1"/>
</dbReference>
<dbReference type="SUPFAM" id="SSF74788">
    <property type="entry name" value="Cullin repeat-like"/>
    <property type="match status" value="1"/>
</dbReference>
<dbReference type="SUPFAM" id="SSF46785">
    <property type="entry name" value="Winged helix' DNA-binding domain"/>
    <property type="match status" value="1"/>
</dbReference>
<dbReference type="PROSITE" id="PS01256">
    <property type="entry name" value="CULLIN_1"/>
    <property type="match status" value="1"/>
</dbReference>
<dbReference type="PROSITE" id="PS50069">
    <property type="entry name" value="CULLIN_2"/>
    <property type="match status" value="1"/>
</dbReference>
<reference key="1">
    <citation type="journal article" date="1995" name="Am. J. Physiol.">
        <title>Expression cloning of an AVP-activated, calcium-mobilizing receptor from rabbit kidney medulla.</title>
        <authorList>
            <person name="Burnatowska-Hledin M.A."/>
            <person name="Spielman W.S."/>
            <person name="Smith W.L."/>
            <person name="Shi P."/>
            <person name="Meyer J.M."/>
            <person name="Dewitt D.L."/>
        </authorList>
    </citation>
    <scope>NUCLEOTIDE SEQUENCE [MRNA]</scope>
    <scope>TISSUE SPECIFICITY</scope>
    <source>
        <strain>New Zealand white</strain>
        <tissue>Adrenal medulla</tissue>
    </source>
</reference>
<protein>
    <recommendedName>
        <fullName evidence="8">Cullin-5</fullName>
        <shortName evidence="8">CUL-5</shortName>
    </recommendedName>
    <alternativeName>
        <fullName evidence="7">Vasopressin-activated calcium-mobilizing receptor 1</fullName>
        <shortName evidence="7">VACM-1</shortName>
    </alternativeName>
</protein>
<accession>Q29425</accession>
<sequence>MATSNLLKNKGSLQFEDKWDFMRPIVLKLLRQESVTKQQWFDLFSDVHAVCLWDDKGPAKIHQALKEDILEFIKQAQARVLSHQDDTALLKAYIVEWRKFFTQCDILPKPFCQLEITLMGKQGSNKKSNVEDSIVRKLMLDTWNESIFSNIKNRLQDSAMKLVHAERLGEAFDSQLVIGVRESYVNLCSNPEDKLQIYRDNFEKAYLDSTERFYRTQAPSYLQQNGVQNYMKYADAKLKEEEKRALRYLETRRECNSVEALMECCVNALVTSFKETILAECQGMIKRNETEKLHLMFSLMDKVPNGIEPMLKDLEEHIISAGLADMVAAAETITTDSEKYVEQLLTLFNRFSKLVKEAFQDDPRFLTARDKAYKAVVNDATIFKLELPLKQKGVGLKTQPESKCPELLANYCDMLLRKTPLSKKLTSEEIEAKLKEVLLVLKYVQNKDVFMRYHKAHLTRRLILDISADSEIEENMVEWLREVGMPADYVNKLARMFQDIKVSEDLNQAFKEMHKNNKLALPADSVNIKILNAGAWSRSSEKVFVSLPTELEDLIPEVEEFYKKNHSGRKLHWHHLMSNGIITFKNEVGQYDLEVTTFQLAVLFAWNQRPREKISFENLKLATELPDAELRRTLWSLVAFPKLKRQVLLYEPQVNSPKDFTEGTLFSVNQEFSLIKNAKVQKRGKINLIGRLQLTTERMREEENEGIVQLRILRTRKLYIQIMKMRKKISNAQLQTELVEILKNMFLPQKKMIKEQIEWLIEHKYIRRDESDINTFIYMA</sequence>
<organism>
    <name type="scientific">Oryctolagus cuniculus</name>
    <name type="common">Rabbit</name>
    <dbReference type="NCBI Taxonomy" id="9986"/>
    <lineage>
        <taxon>Eukaryota</taxon>
        <taxon>Metazoa</taxon>
        <taxon>Chordata</taxon>
        <taxon>Craniata</taxon>
        <taxon>Vertebrata</taxon>
        <taxon>Euteleostomi</taxon>
        <taxon>Mammalia</taxon>
        <taxon>Eutheria</taxon>
        <taxon>Euarchontoglires</taxon>
        <taxon>Glires</taxon>
        <taxon>Lagomorpha</taxon>
        <taxon>Leporidae</taxon>
        <taxon>Oryctolagus</taxon>
    </lineage>
</organism>
<proteinExistence type="evidence at transcript level"/>